<reference key="1">
    <citation type="journal article" date="2000" name="Nature">
        <title>Sequence and analysis of chromosome 3 of the plant Arabidopsis thaliana.</title>
        <authorList>
            <person name="Salanoubat M."/>
            <person name="Lemcke K."/>
            <person name="Rieger M."/>
            <person name="Ansorge W."/>
            <person name="Unseld M."/>
            <person name="Fartmann B."/>
            <person name="Valle G."/>
            <person name="Bloecker H."/>
            <person name="Perez-Alonso M."/>
            <person name="Obermaier B."/>
            <person name="Delseny M."/>
            <person name="Boutry M."/>
            <person name="Grivell L.A."/>
            <person name="Mache R."/>
            <person name="Puigdomenech P."/>
            <person name="De Simone V."/>
            <person name="Choisne N."/>
            <person name="Artiguenave F."/>
            <person name="Robert C."/>
            <person name="Brottier P."/>
            <person name="Wincker P."/>
            <person name="Cattolico L."/>
            <person name="Weissenbach J."/>
            <person name="Saurin W."/>
            <person name="Quetier F."/>
            <person name="Schaefer M."/>
            <person name="Mueller-Auer S."/>
            <person name="Gabel C."/>
            <person name="Fuchs M."/>
            <person name="Benes V."/>
            <person name="Wurmbach E."/>
            <person name="Drzonek H."/>
            <person name="Erfle H."/>
            <person name="Jordan N."/>
            <person name="Bangert S."/>
            <person name="Wiedelmann R."/>
            <person name="Kranz H."/>
            <person name="Voss H."/>
            <person name="Holland R."/>
            <person name="Brandt P."/>
            <person name="Nyakatura G."/>
            <person name="Vezzi A."/>
            <person name="D'Angelo M."/>
            <person name="Pallavicini A."/>
            <person name="Toppo S."/>
            <person name="Simionati B."/>
            <person name="Conrad A."/>
            <person name="Hornischer K."/>
            <person name="Kauer G."/>
            <person name="Loehnert T.-H."/>
            <person name="Nordsiek G."/>
            <person name="Reichelt J."/>
            <person name="Scharfe M."/>
            <person name="Schoen O."/>
            <person name="Bargues M."/>
            <person name="Terol J."/>
            <person name="Climent J."/>
            <person name="Navarro P."/>
            <person name="Collado C."/>
            <person name="Perez-Perez A."/>
            <person name="Ottenwaelder B."/>
            <person name="Duchemin D."/>
            <person name="Cooke R."/>
            <person name="Laudie M."/>
            <person name="Berger-Llauro C."/>
            <person name="Purnelle B."/>
            <person name="Masuy D."/>
            <person name="de Haan M."/>
            <person name="Maarse A.C."/>
            <person name="Alcaraz J.-P."/>
            <person name="Cottet A."/>
            <person name="Casacuberta E."/>
            <person name="Monfort A."/>
            <person name="Argiriou A."/>
            <person name="Flores M."/>
            <person name="Liguori R."/>
            <person name="Vitale D."/>
            <person name="Mannhaupt G."/>
            <person name="Haase D."/>
            <person name="Schoof H."/>
            <person name="Rudd S."/>
            <person name="Zaccaria P."/>
            <person name="Mewes H.-W."/>
            <person name="Mayer K.F.X."/>
            <person name="Kaul S."/>
            <person name="Town C.D."/>
            <person name="Koo H.L."/>
            <person name="Tallon L.J."/>
            <person name="Jenkins J."/>
            <person name="Rooney T."/>
            <person name="Rizzo M."/>
            <person name="Walts A."/>
            <person name="Utterback T."/>
            <person name="Fujii C.Y."/>
            <person name="Shea T.P."/>
            <person name="Creasy T.H."/>
            <person name="Haas B."/>
            <person name="Maiti R."/>
            <person name="Wu D."/>
            <person name="Peterson J."/>
            <person name="Van Aken S."/>
            <person name="Pai G."/>
            <person name="Militscher J."/>
            <person name="Sellers P."/>
            <person name="Gill J.E."/>
            <person name="Feldblyum T.V."/>
            <person name="Preuss D."/>
            <person name="Lin X."/>
            <person name="Nierman W.C."/>
            <person name="Salzberg S.L."/>
            <person name="White O."/>
            <person name="Venter J.C."/>
            <person name="Fraser C.M."/>
            <person name="Kaneko T."/>
            <person name="Nakamura Y."/>
            <person name="Sato S."/>
            <person name="Kato T."/>
            <person name="Asamizu E."/>
            <person name="Sasamoto S."/>
            <person name="Kimura T."/>
            <person name="Idesawa K."/>
            <person name="Kawashima K."/>
            <person name="Kishida Y."/>
            <person name="Kiyokawa C."/>
            <person name="Kohara M."/>
            <person name="Matsumoto M."/>
            <person name="Matsuno A."/>
            <person name="Muraki A."/>
            <person name="Nakayama S."/>
            <person name="Nakazaki N."/>
            <person name="Shinpo S."/>
            <person name="Takeuchi C."/>
            <person name="Wada T."/>
            <person name="Watanabe A."/>
            <person name="Yamada M."/>
            <person name="Yasuda M."/>
            <person name="Tabata S."/>
        </authorList>
    </citation>
    <scope>NUCLEOTIDE SEQUENCE [LARGE SCALE GENOMIC DNA]</scope>
    <source>
        <strain>cv. Columbia</strain>
    </source>
</reference>
<reference key="2">
    <citation type="journal article" date="2017" name="Plant J.">
        <title>Araport11: a complete reannotation of the Arabidopsis thaliana reference genome.</title>
        <authorList>
            <person name="Cheng C.Y."/>
            <person name="Krishnakumar V."/>
            <person name="Chan A.P."/>
            <person name="Thibaud-Nissen F."/>
            <person name="Schobel S."/>
            <person name="Town C.D."/>
        </authorList>
    </citation>
    <scope>GENOME REANNOTATION</scope>
    <source>
        <strain>cv. Columbia</strain>
    </source>
</reference>
<reference key="3">
    <citation type="submission" date="2006-07" db="EMBL/GenBank/DDBJ databases">
        <title>Large-scale analysis of RIKEN Arabidopsis full-length (RAFL) cDNAs.</title>
        <authorList>
            <person name="Totoki Y."/>
            <person name="Seki M."/>
            <person name="Ishida J."/>
            <person name="Nakajima M."/>
            <person name="Enju A."/>
            <person name="Kamiya A."/>
            <person name="Narusaka M."/>
            <person name="Shin-i T."/>
            <person name="Nakagawa M."/>
            <person name="Sakamoto N."/>
            <person name="Oishi K."/>
            <person name="Kohara Y."/>
            <person name="Kobayashi M."/>
            <person name="Toyoda A."/>
            <person name="Sakaki Y."/>
            <person name="Sakurai T."/>
            <person name="Iida K."/>
            <person name="Akiyama K."/>
            <person name="Satou M."/>
            <person name="Toyoda T."/>
            <person name="Konagaya A."/>
            <person name="Carninci P."/>
            <person name="Kawai J."/>
            <person name="Hayashizaki Y."/>
            <person name="Shinozaki K."/>
        </authorList>
    </citation>
    <scope>NUCLEOTIDE SEQUENCE [LARGE SCALE MRNA]</scope>
    <source>
        <strain>cv. Columbia</strain>
    </source>
</reference>
<reference key="4">
    <citation type="journal article" date="2008" name="BMC Genomics">
        <title>Genome-wide analysis of CCCH zinc finger family in Arabidopsis and rice.</title>
        <authorList>
            <person name="Wang D."/>
            <person name="Guo Y."/>
            <person name="Wu C."/>
            <person name="Yang G."/>
            <person name="Li Y."/>
            <person name="Zheng C."/>
        </authorList>
    </citation>
    <scope>NOMENCLATURE</scope>
</reference>
<name>C3H34_ARATH</name>
<proteinExistence type="evidence at transcript level"/>
<organism>
    <name type="scientific">Arabidopsis thaliana</name>
    <name type="common">Mouse-ear cress</name>
    <dbReference type="NCBI Taxonomy" id="3702"/>
    <lineage>
        <taxon>Eukaryota</taxon>
        <taxon>Viridiplantae</taxon>
        <taxon>Streptophyta</taxon>
        <taxon>Embryophyta</taxon>
        <taxon>Tracheophyta</taxon>
        <taxon>Spermatophyta</taxon>
        <taxon>Magnoliopsida</taxon>
        <taxon>eudicotyledons</taxon>
        <taxon>Gunneridae</taxon>
        <taxon>Pentapetalae</taxon>
        <taxon>rosids</taxon>
        <taxon>malvids</taxon>
        <taxon>Brassicales</taxon>
        <taxon>Brassicaceae</taxon>
        <taxon>Camelineae</taxon>
        <taxon>Arabidopsis</taxon>
    </lineage>
</organism>
<gene>
    <name type="ordered locus">At3g06410</name>
    <name type="ORF">F24P17.12</name>
</gene>
<feature type="chain" id="PRO_0000213916" description="Zinc finger CCCH domain-containing protein 34">
    <location>
        <begin position="1"/>
        <end position="462"/>
    </location>
</feature>
<feature type="zinc finger region" description="C3H1-type 1" evidence="2">
    <location>
        <begin position="54"/>
        <end position="82"/>
    </location>
</feature>
<feature type="zinc finger region" description="C3H1-type 2" evidence="2">
    <location>
        <begin position="100"/>
        <end position="128"/>
    </location>
</feature>
<feature type="zinc finger region" description="C3H1-type 3" evidence="2">
    <location>
        <begin position="148"/>
        <end position="176"/>
    </location>
</feature>
<feature type="zinc finger region" description="C3H1-type 4" evidence="2">
    <location>
        <begin position="307"/>
        <end position="335"/>
    </location>
</feature>
<feature type="zinc finger region" description="C3H1-type 5" evidence="2">
    <location>
        <begin position="353"/>
        <end position="381"/>
    </location>
</feature>
<feature type="region of interest" description="Disordered" evidence="3">
    <location>
        <begin position="1"/>
        <end position="26"/>
    </location>
</feature>
<feature type="region of interest" description="Disordered" evidence="3">
    <location>
        <begin position="288"/>
        <end position="310"/>
    </location>
</feature>
<feature type="region of interest" description="Disordered" evidence="3">
    <location>
        <begin position="405"/>
        <end position="462"/>
    </location>
</feature>
<feature type="compositionally biased region" description="Basic and acidic residues" evidence="3">
    <location>
        <begin position="1"/>
        <end position="13"/>
    </location>
</feature>
<feature type="compositionally biased region" description="Polar residues" evidence="3">
    <location>
        <begin position="288"/>
        <end position="303"/>
    </location>
</feature>
<feature type="compositionally biased region" description="Low complexity" evidence="3">
    <location>
        <begin position="405"/>
        <end position="418"/>
    </location>
</feature>
<feature type="compositionally biased region" description="Polar residues" evidence="3">
    <location>
        <begin position="446"/>
        <end position="462"/>
    </location>
</feature>
<feature type="sequence conflict" description="In Ref. 3; BAF02113." evidence="4" ref="3">
    <original>T</original>
    <variation>A</variation>
    <location>
        <position position="460"/>
    </location>
</feature>
<comment type="subcellular location">
    <subcellularLocation>
        <location evidence="1">Nucleus</location>
    </subcellularLocation>
</comment>
<comment type="sequence caution" evidence="4">
    <conflict type="erroneous gene model prediction">
        <sequence resource="EMBL-CDS" id="AAF08587"/>
    </conflict>
</comment>
<accession>Q9SQU4</accession>
<accession>Q0WKX1</accession>
<accession>Q0WL94</accession>
<dbReference type="EMBL" id="AC011623">
    <property type="protein sequence ID" value="AAF08587.1"/>
    <property type="status" value="ALT_SEQ"/>
    <property type="molecule type" value="Genomic_DNA"/>
</dbReference>
<dbReference type="EMBL" id="CP002686">
    <property type="protein sequence ID" value="AEE74389.1"/>
    <property type="molecule type" value="Genomic_DNA"/>
</dbReference>
<dbReference type="EMBL" id="AK230312">
    <property type="protein sequence ID" value="BAF02113.1"/>
    <property type="molecule type" value="mRNA"/>
</dbReference>
<dbReference type="EMBL" id="AK230438">
    <property type="protein sequence ID" value="BAF02236.1"/>
    <property type="molecule type" value="mRNA"/>
</dbReference>
<dbReference type="RefSeq" id="NP_187292.2">
    <property type="nucleotide sequence ID" value="NM_111516.5"/>
</dbReference>
<dbReference type="BioGRID" id="5150">
    <property type="interactions" value="3"/>
</dbReference>
<dbReference type="FunCoup" id="Q9SQU4">
    <property type="interactions" value="336"/>
</dbReference>
<dbReference type="IntAct" id="Q9SQU4">
    <property type="interactions" value="3"/>
</dbReference>
<dbReference type="STRING" id="3702.Q9SQU4"/>
<dbReference type="PaxDb" id="3702-AT3G06410.1"/>
<dbReference type="ProteomicsDB" id="239160"/>
<dbReference type="EnsemblPlants" id="AT3G06410.1">
    <property type="protein sequence ID" value="AT3G06410.1"/>
    <property type="gene ID" value="AT3G06410"/>
</dbReference>
<dbReference type="GeneID" id="819815"/>
<dbReference type="Gramene" id="AT3G06410.1">
    <property type="protein sequence ID" value="AT3G06410.1"/>
    <property type="gene ID" value="AT3G06410"/>
</dbReference>
<dbReference type="KEGG" id="ath:AT3G06410"/>
<dbReference type="Araport" id="AT3G06410"/>
<dbReference type="TAIR" id="AT3G06410"/>
<dbReference type="eggNOG" id="KOG1677">
    <property type="taxonomic scope" value="Eukaryota"/>
</dbReference>
<dbReference type="HOGENOM" id="CLU_033292_1_0_1"/>
<dbReference type="InParanoid" id="Q9SQU4"/>
<dbReference type="OMA" id="LEWTSHG"/>
<dbReference type="PhylomeDB" id="Q9SQU4"/>
<dbReference type="PRO" id="PR:Q9SQU4"/>
<dbReference type="Proteomes" id="UP000006548">
    <property type="component" value="Chromosome 3"/>
</dbReference>
<dbReference type="ExpressionAtlas" id="Q9SQU4">
    <property type="expression patterns" value="baseline and differential"/>
</dbReference>
<dbReference type="GO" id="GO:0005634">
    <property type="term" value="C:nucleus"/>
    <property type="evidence" value="ECO:0007669"/>
    <property type="project" value="UniProtKB-SubCell"/>
</dbReference>
<dbReference type="GO" id="GO:0003677">
    <property type="term" value="F:DNA binding"/>
    <property type="evidence" value="ECO:0007669"/>
    <property type="project" value="UniProtKB-KW"/>
</dbReference>
<dbReference type="GO" id="GO:0003729">
    <property type="term" value="F:mRNA binding"/>
    <property type="evidence" value="ECO:0000314"/>
    <property type="project" value="TAIR"/>
</dbReference>
<dbReference type="GO" id="GO:0008270">
    <property type="term" value="F:zinc ion binding"/>
    <property type="evidence" value="ECO:0007669"/>
    <property type="project" value="UniProtKB-KW"/>
</dbReference>
<dbReference type="FunFam" id="4.10.1000.10:FF:000030">
    <property type="entry name" value="CCCH type zinc finger protein"/>
    <property type="match status" value="1"/>
</dbReference>
<dbReference type="FunFam" id="4.10.1000.10:FF:000028">
    <property type="entry name" value="Zinc finger nuclease 2"/>
    <property type="match status" value="1"/>
</dbReference>
<dbReference type="Gene3D" id="2.30.30.1190">
    <property type="match status" value="1"/>
</dbReference>
<dbReference type="Gene3D" id="4.10.1000.10">
    <property type="entry name" value="Zinc finger, CCCH-type"/>
    <property type="match status" value="2"/>
</dbReference>
<dbReference type="InterPro" id="IPR050974">
    <property type="entry name" value="Plant_ZF_CCCH"/>
</dbReference>
<dbReference type="InterPro" id="IPR000571">
    <property type="entry name" value="Znf_CCCH"/>
</dbReference>
<dbReference type="InterPro" id="IPR036855">
    <property type="entry name" value="Znf_CCCH_sf"/>
</dbReference>
<dbReference type="PANTHER" id="PTHR12506">
    <property type="entry name" value="PROTEIN PHOSPHATASE RELATED"/>
    <property type="match status" value="1"/>
</dbReference>
<dbReference type="PANTHER" id="PTHR12506:SF60">
    <property type="entry name" value="ZINC FINGER CCCH DOMAIN-CONTAINING PROTEIN 34"/>
    <property type="match status" value="1"/>
</dbReference>
<dbReference type="Pfam" id="PF00642">
    <property type="entry name" value="zf-CCCH"/>
    <property type="match status" value="5"/>
</dbReference>
<dbReference type="SMART" id="SM00356">
    <property type="entry name" value="ZnF_C3H1"/>
    <property type="match status" value="5"/>
</dbReference>
<dbReference type="SUPFAM" id="SSF90229">
    <property type="entry name" value="CCCH zinc finger"/>
    <property type="match status" value="5"/>
</dbReference>
<dbReference type="PROSITE" id="PS50103">
    <property type="entry name" value="ZF_C3H1"/>
    <property type="match status" value="5"/>
</dbReference>
<keyword id="KW-0238">DNA-binding</keyword>
<keyword id="KW-0479">Metal-binding</keyword>
<keyword id="KW-0539">Nucleus</keyword>
<keyword id="KW-1185">Reference proteome</keyword>
<keyword id="KW-0677">Repeat</keyword>
<keyword id="KW-0862">Zinc</keyword>
<keyword id="KW-0863">Zinc-finger</keyword>
<protein>
    <recommendedName>
        <fullName>Zinc finger CCCH domain-containing protein 34</fullName>
        <shortName>AtC3H34</shortName>
    </recommendedName>
    <alternativeName>
        <fullName>Zinc finger CCCH domain-containing protein ZFN-like 2</fullName>
    </alternativeName>
</protein>
<sequence length="462" mass="48852">MERYGRPGEEGSRSDPSLEWTSHGGETAVEAPMWRLGLSGGGGGGGGGESYPERPDEPDCIYYLRTGVCGYGSRCRFNHPRDRGAVIGGVRGEAGALPERMGHPVCQHFMRTGTCKFGASCKYHHPRQGGGGGSVAPVSLSYLGYPLRPGEKECSYYLRTGQCKFGLTCRFNHPVPLAVQGPPQQPQQQQPQPQPQLQTIYPTLQSQSIPSSQQYGLVLTRPSFLTGSYLQSPYGPPMVLPPGMVPYSGWNPYQASLSAMPSPGTQPSIGSSSIYGLTPLSPSATAYTGTYQSVPSSNSTSKEFPQRPDQPECQYFMRTGDCKFGSSCRYHHPVDAVPPKTGIVLSSIGLPLRPGVAQCTHFAQHGICKFGPACKFDHSMSSSLSYSPSASSLTDMPVAPYPIGSSSLSGSSAPVSSSNEPTKEAVTPAVSSMVSGLSRPEPAETSGDSASVSGSIEAKTSS</sequence>
<evidence type="ECO:0000250" key="1"/>
<evidence type="ECO:0000255" key="2">
    <source>
        <dbReference type="PROSITE-ProRule" id="PRU00723"/>
    </source>
</evidence>
<evidence type="ECO:0000256" key="3">
    <source>
        <dbReference type="SAM" id="MobiDB-lite"/>
    </source>
</evidence>
<evidence type="ECO:0000305" key="4"/>